<accession>A1JMX4</accession>
<comment type="function">
    <text evidence="1">Involved in pyrimidine catabolism. Catalyzes the deamination of 3-aminoacrylate to malonic semialdehyde, a reaction that can also occur spontaneously. RutC may facilitate the reaction and modulate the metabolic fitness, rather than catalyzing essential functions.</text>
</comment>
<comment type="catalytic activity">
    <reaction evidence="1">
        <text>(Z)-3-aminoacrylate + H2O + H(+) = 3-oxopropanoate + NH4(+)</text>
        <dbReference type="Rhea" id="RHEA:34947"/>
        <dbReference type="ChEBI" id="CHEBI:15377"/>
        <dbReference type="ChEBI" id="CHEBI:15378"/>
        <dbReference type="ChEBI" id="CHEBI:28938"/>
        <dbReference type="ChEBI" id="CHEBI:33190"/>
        <dbReference type="ChEBI" id="CHEBI:59894"/>
    </reaction>
</comment>
<comment type="similarity">
    <text evidence="1">Belongs to the RutC family.</text>
</comment>
<keyword id="KW-0378">Hydrolase</keyword>
<evidence type="ECO:0000255" key="1">
    <source>
        <dbReference type="HAMAP-Rule" id="MF_00831"/>
    </source>
</evidence>
<reference key="1">
    <citation type="journal article" date="2006" name="PLoS Genet.">
        <title>The complete genome sequence and comparative genome analysis of the high pathogenicity Yersinia enterocolitica strain 8081.</title>
        <authorList>
            <person name="Thomson N.R."/>
            <person name="Howard S."/>
            <person name="Wren B.W."/>
            <person name="Holden M.T.G."/>
            <person name="Crossman L."/>
            <person name="Challis G.L."/>
            <person name="Churcher C."/>
            <person name="Mungall K."/>
            <person name="Brooks K."/>
            <person name="Chillingworth T."/>
            <person name="Feltwell T."/>
            <person name="Abdellah Z."/>
            <person name="Hauser H."/>
            <person name="Jagels K."/>
            <person name="Maddison M."/>
            <person name="Moule S."/>
            <person name="Sanders M."/>
            <person name="Whitehead S."/>
            <person name="Quail M.A."/>
            <person name="Dougan G."/>
            <person name="Parkhill J."/>
            <person name="Prentice M.B."/>
        </authorList>
    </citation>
    <scope>NUCLEOTIDE SEQUENCE [LARGE SCALE GENOMIC DNA]</scope>
    <source>
        <strain>NCTC 13174 / 8081</strain>
    </source>
</reference>
<organism>
    <name type="scientific">Yersinia enterocolitica serotype O:8 / biotype 1B (strain NCTC 13174 / 8081)</name>
    <dbReference type="NCBI Taxonomy" id="393305"/>
    <lineage>
        <taxon>Bacteria</taxon>
        <taxon>Pseudomonadati</taxon>
        <taxon>Pseudomonadota</taxon>
        <taxon>Gammaproteobacteria</taxon>
        <taxon>Enterobacterales</taxon>
        <taxon>Yersiniaceae</taxon>
        <taxon>Yersinia</taxon>
    </lineage>
</organism>
<protein>
    <recommendedName>
        <fullName evidence="1">3-aminoacrylate deaminase RutC</fullName>
        <shortName evidence="1">3-AA deaminase</shortName>
        <ecNumber evidence="1">3.5.-.-</ecNumber>
    </recommendedName>
</protein>
<sequence length="129" mass="13831">MMPKTIITPPGSGTPLAPFSPGTLADGVMYVSGTLAFDKQNNVVHIGDAAGQTRHVLETIKSVIETAGGSLDDITFNSIFLTDWQHYAAINQVYAEYFPGDKPARFCIQCGLVKPDALIEIASVAHLPR</sequence>
<name>RUTC_YERE8</name>
<dbReference type="EC" id="3.5.-.-" evidence="1"/>
<dbReference type="EMBL" id="AM286415">
    <property type="protein sequence ID" value="CAL12027.1"/>
    <property type="molecule type" value="Genomic_DNA"/>
</dbReference>
<dbReference type="RefSeq" id="YP_001006203.1">
    <property type="nucleotide sequence ID" value="NC_008800.1"/>
</dbReference>
<dbReference type="SMR" id="A1JMX4"/>
<dbReference type="KEGG" id="yen:YE1948"/>
<dbReference type="PATRIC" id="fig|393305.7.peg.2105"/>
<dbReference type="eggNOG" id="COG0251">
    <property type="taxonomic scope" value="Bacteria"/>
</dbReference>
<dbReference type="HOGENOM" id="CLU_100715_7_3_6"/>
<dbReference type="OrthoDB" id="583118at2"/>
<dbReference type="Proteomes" id="UP000000642">
    <property type="component" value="Chromosome"/>
</dbReference>
<dbReference type="GO" id="GO:0005829">
    <property type="term" value="C:cytosol"/>
    <property type="evidence" value="ECO:0007669"/>
    <property type="project" value="TreeGrafter"/>
</dbReference>
<dbReference type="GO" id="GO:0019239">
    <property type="term" value="F:deaminase activity"/>
    <property type="evidence" value="ECO:0007669"/>
    <property type="project" value="TreeGrafter"/>
</dbReference>
<dbReference type="GO" id="GO:0019740">
    <property type="term" value="P:nitrogen utilization"/>
    <property type="evidence" value="ECO:0007669"/>
    <property type="project" value="UniProtKB-UniRule"/>
</dbReference>
<dbReference type="GO" id="GO:0006212">
    <property type="term" value="P:uracil catabolic process"/>
    <property type="evidence" value="ECO:0007669"/>
    <property type="project" value="UniProtKB-UniRule"/>
</dbReference>
<dbReference type="CDD" id="cd00448">
    <property type="entry name" value="YjgF_YER057c_UK114_family"/>
    <property type="match status" value="1"/>
</dbReference>
<dbReference type="Gene3D" id="3.30.1330.40">
    <property type="entry name" value="RutC-like"/>
    <property type="match status" value="1"/>
</dbReference>
<dbReference type="HAMAP" id="MF_00831">
    <property type="entry name" value="RutC"/>
    <property type="match status" value="1"/>
</dbReference>
<dbReference type="InterPro" id="IPR019897">
    <property type="entry name" value="RidA_CS"/>
</dbReference>
<dbReference type="InterPro" id="IPR019898">
    <property type="entry name" value="RutC"/>
</dbReference>
<dbReference type="InterPro" id="IPR035959">
    <property type="entry name" value="RutC-like_sf"/>
</dbReference>
<dbReference type="InterPro" id="IPR006175">
    <property type="entry name" value="YjgF/YER057c/UK114"/>
</dbReference>
<dbReference type="NCBIfam" id="TIGR03610">
    <property type="entry name" value="RutC"/>
    <property type="match status" value="1"/>
</dbReference>
<dbReference type="PANTHER" id="PTHR11803">
    <property type="entry name" value="2-IMINOBUTANOATE/2-IMINOPROPANOATE DEAMINASE RIDA"/>
    <property type="match status" value="1"/>
</dbReference>
<dbReference type="PANTHER" id="PTHR11803:SF58">
    <property type="entry name" value="PROTEIN HMF1-RELATED"/>
    <property type="match status" value="1"/>
</dbReference>
<dbReference type="Pfam" id="PF01042">
    <property type="entry name" value="Ribonuc_L-PSP"/>
    <property type="match status" value="1"/>
</dbReference>
<dbReference type="SUPFAM" id="SSF55298">
    <property type="entry name" value="YjgF-like"/>
    <property type="match status" value="1"/>
</dbReference>
<dbReference type="PROSITE" id="PS01094">
    <property type="entry name" value="UPF0076"/>
    <property type="match status" value="1"/>
</dbReference>
<gene>
    <name evidence="1" type="primary">rutC</name>
    <name type="ordered locus">YE1948</name>
</gene>
<feature type="chain" id="PRO_0000402770" description="3-aminoacrylate deaminase RutC">
    <location>
        <begin position="1"/>
        <end position="129"/>
    </location>
</feature>
<proteinExistence type="inferred from homology"/>